<keyword id="KW-0067">ATP-binding</keyword>
<keyword id="KW-0173">Coenzyme A biosynthesis</keyword>
<keyword id="KW-0963">Cytoplasm</keyword>
<keyword id="KW-0460">Magnesium</keyword>
<keyword id="KW-0547">Nucleotide-binding</keyword>
<keyword id="KW-0548">Nucleotidyltransferase</keyword>
<keyword id="KW-1185">Reference proteome</keyword>
<keyword id="KW-0808">Transferase</keyword>
<feature type="chain" id="PRO_1000011230" description="Phosphopantetheine adenylyltransferase">
    <location>
        <begin position="1"/>
        <end position="168"/>
    </location>
</feature>
<feature type="binding site" evidence="1">
    <location>
        <begin position="10"/>
        <end position="11"/>
    </location>
    <ligand>
        <name>ATP</name>
        <dbReference type="ChEBI" id="CHEBI:30616"/>
    </ligand>
</feature>
<feature type="binding site" evidence="1">
    <location>
        <position position="10"/>
    </location>
    <ligand>
        <name>substrate</name>
    </ligand>
</feature>
<feature type="binding site" evidence="1">
    <location>
        <position position="18"/>
    </location>
    <ligand>
        <name>ATP</name>
        <dbReference type="ChEBI" id="CHEBI:30616"/>
    </ligand>
</feature>
<feature type="binding site" evidence="1">
    <location>
        <position position="42"/>
    </location>
    <ligand>
        <name>substrate</name>
    </ligand>
</feature>
<feature type="binding site" evidence="1">
    <location>
        <position position="74"/>
    </location>
    <ligand>
        <name>substrate</name>
    </ligand>
</feature>
<feature type="binding site" evidence="1">
    <location>
        <position position="88"/>
    </location>
    <ligand>
        <name>substrate</name>
    </ligand>
</feature>
<feature type="binding site" evidence="1">
    <location>
        <begin position="89"/>
        <end position="91"/>
    </location>
    <ligand>
        <name>ATP</name>
        <dbReference type="ChEBI" id="CHEBI:30616"/>
    </ligand>
</feature>
<feature type="binding site" evidence="1">
    <location>
        <position position="99"/>
    </location>
    <ligand>
        <name>ATP</name>
        <dbReference type="ChEBI" id="CHEBI:30616"/>
    </ligand>
</feature>
<feature type="binding site" evidence="1">
    <location>
        <begin position="124"/>
        <end position="130"/>
    </location>
    <ligand>
        <name>ATP</name>
        <dbReference type="ChEBI" id="CHEBI:30616"/>
    </ligand>
</feature>
<feature type="site" description="Transition state stabilizer" evidence="1">
    <location>
        <position position="18"/>
    </location>
</feature>
<name>COAD_SHEDO</name>
<gene>
    <name evidence="1" type="primary">coaD</name>
    <name type="ordered locus">Sden_0208</name>
</gene>
<accession>Q12SS1</accession>
<evidence type="ECO:0000255" key="1">
    <source>
        <dbReference type="HAMAP-Rule" id="MF_00151"/>
    </source>
</evidence>
<protein>
    <recommendedName>
        <fullName evidence="1">Phosphopantetheine adenylyltransferase</fullName>
        <ecNumber evidence="1">2.7.7.3</ecNumber>
    </recommendedName>
    <alternativeName>
        <fullName evidence="1">Dephospho-CoA pyrophosphorylase</fullName>
    </alternativeName>
    <alternativeName>
        <fullName evidence="1">Pantetheine-phosphate adenylyltransferase</fullName>
        <shortName evidence="1">PPAT</shortName>
    </alternativeName>
</protein>
<dbReference type="EC" id="2.7.7.3" evidence="1"/>
<dbReference type="EMBL" id="CP000302">
    <property type="protein sequence ID" value="ABE53505.1"/>
    <property type="molecule type" value="Genomic_DNA"/>
</dbReference>
<dbReference type="RefSeq" id="WP_011494672.1">
    <property type="nucleotide sequence ID" value="NC_007954.1"/>
</dbReference>
<dbReference type="SMR" id="Q12SS1"/>
<dbReference type="STRING" id="318161.Sden_0208"/>
<dbReference type="KEGG" id="sdn:Sden_0208"/>
<dbReference type="eggNOG" id="COG0669">
    <property type="taxonomic scope" value="Bacteria"/>
</dbReference>
<dbReference type="HOGENOM" id="CLU_100149_0_1_6"/>
<dbReference type="OrthoDB" id="9806661at2"/>
<dbReference type="UniPathway" id="UPA00241">
    <property type="reaction ID" value="UER00355"/>
</dbReference>
<dbReference type="Proteomes" id="UP000001982">
    <property type="component" value="Chromosome"/>
</dbReference>
<dbReference type="GO" id="GO:0005737">
    <property type="term" value="C:cytoplasm"/>
    <property type="evidence" value="ECO:0007669"/>
    <property type="project" value="UniProtKB-SubCell"/>
</dbReference>
<dbReference type="GO" id="GO:0005524">
    <property type="term" value="F:ATP binding"/>
    <property type="evidence" value="ECO:0007669"/>
    <property type="project" value="UniProtKB-KW"/>
</dbReference>
<dbReference type="GO" id="GO:0004595">
    <property type="term" value="F:pantetheine-phosphate adenylyltransferase activity"/>
    <property type="evidence" value="ECO:0007669"/>
    <property type="project" value="UniProtKB-UniRule"/>
</dbReference>
<dbReference type="GO" id="GO:0015937">
    <property type="term" value="P:coenzyme A biosynthetic process"/>
    <property type="evidence" value="ECO:0007669"/>
    <property type="project" value="UniProtKB-UniRule"/>
</dbReference>
<dbReference type="CDD" id="cd02163">
    <property type="entry name" value="PPAT"/>
    <property type="match status" value="1"/>
</dbReference>
<dbReference type="Gene3D" id="3.40.50.620">
    <property type="entry name" value="HUPs"/>
    <property type="match status" value="1"/>
</dbReference>
<dbReference type="HAMAP" id="MF_00151">
    <property type="entry name" value="PPAT_bact"/>
    <property type="match status" value="1"/>
</dbReference>
<dbReference type="InterPro" id="IPR004821">
    <property type="entry name" value="Cyt_trans-like"/>
</dbReference>
<dbReference type="InterPro" id="IPR001980">
    <property type="entry name" value="PPAT"/>
</dbReference>
<dbReference type="InterPro" id="IPR014729">
    <property type="entry name" value="Rossmann-like_a/b/a_fold"/>
</dbReference>
<dbReference type="NCBIfam" id="TIGR01510">
    <property type="entry name" value="coaD_prev_kdtB"/>
    <property type="match status" value="1"/>
</dbReference>
<dbReference type="NCBIfam" id="TIGR00125">
    <property type="entry name" value="cyt_tran_rel"/>
    <property type="match status" value="1"/>
</dbReference>
<dbReference type="PANTHER" id="PTHR21342">
    <property type="entry name" value="PHOSPHOPANTETHEINE ADENYLYLTRANSFERASE"/>
    <property type="match status" value="1"/>
</dbReference>
<dbReference type="PANTHER" id="PTHR21342:SF1">
    <property type="entry name" value="PHOSPHOPANTETHEINE ADENYLYLTRANSFERASE"/>
    <property type="match status" value="1"/>
</dbReference>
<dbReference type="Pfam" id="PF01467">
    <property type="entry name" value="CTP_transf_like"/>
    <property type="match status" value="1"/>
</dbReference>
<dbReference type="PRINTS" id="PR01020">
    <property type="entry name" value="LPSBIOSNTHSS"/>
</dbReference>
<dbReference type="SUPFAM" id="SSF52374">
    <property type="entry name" value="Nucleotidylyl transferase"/>
    <property type="match status" value="1"/>
</dbReference>
<reference key="1">
    <citation type="submission" date="2006-03" db="EMBL/GenBank/DDBJ databases">
        <title>Complete sequence of Shewanella denitrificans OS217.</title>
        <authorList>
            <consortium name="US DOE Joint Genome Institute"/>
            <person name="Copeland A."/>
            <person name="Lucas S."/>
            <person name="Lapidus A."/>
            <person name="Barry K."/>
            <person name="Detter J.C."/>
            <person name="Glavina del Rio T."/>
            <person name="Hammon N."/>
            <person name="Israni S."/>
            <person name="Dalin E."/>
            <person name="Tice H."/>
            <person name="Pitluck S."/>
            <person name="Brettin T."/>
            <person name="Bruce D."/>
            <person name="Han C."/>
            <person name="Tapia R."/>
            <person name="Gilna P."/>
            <person name="Kiss H."/>
            <person name="Schmutz J."/>
            <person name="Larimer F."/>
            <person name="Land M."/>
            <person name="Hauser L."/>
            <person name="Kyrpides N."/>
            <person name="Lykidis A."/>
            <person name="Richardson P."/>
        </authorList>
    </citation>
    <scope>NUCLEOTIDE SEQUENCE [LARGE SCALE GENOMIC DNA]</scope>
    <source>
        <strain>OS217 / ATCC BAA-1090 / DSM 15013</strain>
    </source>
</reference>
<organism>
    <name type="scientific">Shewanella denitrificans (strain OS217 / ATCC BAA-1090 / DSM 15013)</name>
    <dbReference type="NCBI Taxonomy" id="318161"/>
    <lineage>
        <taxon>Bacteria</taxon>
        <taxon>Pseudomonadati</taxon>
        <taxon>Pseudomonadota</taxon>
        <taxon>Gammaproteobacteria</taxon>
        <taxon>Alteromonadales</taxon>
        <taxon>Shewanellaceae</taxon>
        <taxon>Shewanella</taxon>
    </lineage>
</organism>
<sequence length="168" mass="18593">MHRRAIYPGTFDPVTNGHADLIERAAKLFKHVIIGIAANPSKQPRFTLEERVEQLTLVTAHLDNVEVVGFSGLLVDFARDQKASVLVRGLRAVSDFEYEFQLANMNRRLSPDLESVFLTPAEENSFISSTLVKEVALHGGDVSQFVHPQVALALKEKIAAMKANKGNK</sequence>
<proteinExistence type="inferred from homology"/>
<comment type="function">
    <text evidence="1">Reversibly transfers an adenylyl group from ATP to 4'-phosphopantetheine, yielding dephospho-CoA (dPCoA) and pyrophosphate.</text>
</comment>
<comment type="catalytic activity">
    <reaction evidence="1">
        <text>(R)-4'-phosphopantetheine + ATP + H(+) = 3'-dephospho-CoA + diphosphate</text>
        <dbReference type="Rhea" id="RHEA:19801"/>
        <dbReference type="ChEBI" id="CHEBI:15378"/>
        <dbReference type="ChEBI" id="CHEBI:30616"/>
        <dbReference type="ChEBI" id="CHEBI:33019"/>
        <dbReference type="ChEBI" id="CHEBI:57328"/>
        <dbReference type="ChEBI" id="CHEBI:61723"/>
        <dbReference type="EC" id="2.7.7.3"/>
    </reaction>
</comment>
<comment type="cofactor">
    <cofactor evidence="1">
        <name>Mg(2+)</name>
        <dbReference type="ChEBI" id="CHEBI:18420"/>
    </cofactor>
</comment>
<comment type="pathway">
    <text evidence="1">Cofactor biosynthesis; coenzyme A biosynthesis; CoA from (R)-pantothenate: step 4/5.</text>
</comment>
<comment type="subunit">
    <text evidence="1">Homohexamer.</text>
</comment>
<comment type="subcellular location">
    <subcellularLocation>
        <location evidence="1">Cytoplasm</location>
    </subcellularLocation>
</comment>
<comment type="similarity">
    <text evidence="1">Belongs to the bacterial CoaD family.</text>
</comment>